<feature type="chain" id="PRO_0000316919" description="Capsid protein">
    <location>
        <begin position="1"/>
        <end position="244"/>
    </location>
</feature>
<feature type="region of interest" description="Disordered" evidence="2">
    <location>
        <begin position="1"/>
        <end position="39"/>
    </location>
</feature>
<feature type="short sequence motif" description="Bipartite nuclear localization signal" evidence="1">
    <location>
        <begin position="1"/>
        <end position="24"/>
    </location>
</feature>
<organism>
    <name type="scientific">Maize streak virus genotype B (isolate Tas)</name>
    <name type="common">MSV</name>
    <dbReference type="NCBI Taxonomy" id="268409"/>
    <lineage>
        <taxon>Viruses</taxon>
        <taxon>Monodnaviria</taxon>
        <taxon>Shotokuvirae</taxon>
        <taxon>Cressdnaviricota</taxon>
        <taxon>Repensiviricetes</taxon>
        <taxon>Geplafuvirales</taxon>
        <taxon>Geminiviridae</taxon>
        <taxon>Mastrevirus</taxon>
        <taxon>Maize streak virus</taxon>
    </lineage>
</organism>
<name>CAPSD_MSVTA</name>
<comment type="function">
    <text evidence="1">Encapsidates the viral genome into characteristic twinned ('geminate') particles. Binds the genomic viral ssDNA and shuttles it into and out of the cell nucleus. Plays a role in protection of the genome from degradation, virus acquisition and transmission by insect vectors, infectivity, and systemic movement. The CP of monopartite geminiviruses is absolutely essential for virus movement (By similarity).</text>
</comment>
<comment type="subunit">
    <text evidence="1">Homomultimer. Interacts with the movement protein. Binds to single-stranded and double-stranded viral DNA (By similarity).</text>
</comment>
<comment type="subcellular location">
    <subcellularLocation>
        <location evidence="1">Virion</location>
    </subcellularLocation>
    <subcellularLocation>
        <location>Host nucleus</location>
    </subcellularLocation>
    <text evidence="1">It is actively transported into the host cell nucleus. It may be exported out of the nucleus through a nuclear export signal for cell-to-cell movement and spread (By similarity).</text>
</comment>
<comment type="similarity">
    <text evidence="3">Belongs to the geminiviridae capsid protein family.</text>
</comment>
<sequence>MSTSKRKRGDDANWNKRTTKKKPSSAGLKKAGSKAERPSLQIQTLQHAGSTMITVPSGGVCDLINTYARGSDEGNRHTSETLTYKIAVDYHFVADSQACKYSNTGTGVMWLVYDTTPGGQAPTPQTIFAYPDTLKAWPATWKVSRELCHRFVVKRRWLFNMETDGRIGSDIPPSNASWKPCKRNIYFHKFTSGLGVRTQWKNVTDGGVGAIQRGALYMVIAPGNGLTFTAHGQTRLYFKSVGNQ</sequence>
<gene>
    <name type="ORF">V1</name>
</gene>
<organismHost>
    <name type="scientific">Avena sativa</name>
    <name type="common">Oat</name>
    <dbReference type="NCBI Taxonomy" id="4498"/>
</organismHost>
<organismHost>
    <name type="scientific">Axonopus compressus</name>
    <dbReference type="NCBI Taxonomy" id="217170"/>
</organismHost>
<organismHost>
    <name type="scientific">Cenchrus americanus</name>
    <name type="common">Pearl millet</name>
    <name type="synonym">Pennisetum glaucum</name>
    <dbReference type="NCBI Taxonomy" id="4543"/>
</organismHost>
<organismHost>
    <name type="scientific">Cenchrus polystachios</name>
    <dbReference type="NCBI Taxonomy" id="281129"/>
</organismHost>
<organismHost>
    <name type="scientific">Coix lacryma-jobi</name>
    <name type="common">Job's tears</name>
    <dbReference type="NCBI Taxonomy" id="4505"/>
</organismHost>
<organismHost>
    <name type="scientific">Dactyloctenium aegyptium</name>
    <dbReference type="NCBI Taxonomy" id="270102"/>
</organismHost>
<organismHost>
    <name type="scientific">Digitaria</name>
    <dbReference type="NCBI Taxonomy" id="66017"/>
</organismHost>
<organismHost>
    <name type="scientific">Echinochloa colona</name>
    <dbReference type="NCBI Taxonomy" id="90396"/>
</organismHost>
<organismHost>
    <name type="scientific">Eleusine coracana</name>
    <name type="common">Indian finger millet</name>
    <name type="synonym">Ragi</name>
    <dbReference type="NCBI Taxonomy" id="4511"/>
</organismHost>
<organismHost>
    <name type="scientific">Eleusine indica</name>
    <name type="common">Goosegrass</name>
    <name type="synonym">Cynosurus indicus</name>
    <dbReference type="NCBI Taxonomy" id="29674"/>
</organismHost>
<organismHost>
    <name type="scientific">Hordeum vulgare</name>
    <name type="common">Barley</name>
    <dbReference type="NCBI Taxonomy" id="4513"/>
</organismHost>
<organismHost>
    <name type="scientific">Megathyrsus maximus</name>
    <dbReference type="NCBI Taxonomy" id="59788"/>
</organismHost>
<organismHost>
    <name type="scientific">Melinis repens</name>
    <name type="common">Red Natal grass</name>
    <name type="synonym">Rhynchelytrum repens</name>
    <dbReference type="NCBI Taxonomy" id="29709"/>
</organismHost>
<organismHost>
    <name type="scientific">Oryza glaberrima</name>
    <name type="common">African rice</name>
    <dbReference type="NCBI Taxonomy" id="4538"/>
</organismHost>
<organismHost>
    <name type="scientific">Oryza sativa</name>
    <name type="common">Rice</name>
    <dbReference type="NCBI Taxonomy" id="4530"/>
</organismHost>
<organismHost>
    <name type="scientific">Paspalum conjugatum</name>
    <name type="common">Hilo grass</name>
    <dbReference type="NCBI Taxonomy" id="158143"/>
</organismHost>
<organismHost>
    <name type="scientific">Paspalum notatum</name>
    <name type="common">Bahia grass</name>
    <dbReference type="NCBI Taxonomy" id="147272"/>
</organismHost>
<organismHost>
    <name type="scientific">Paspalum scrobiculatum</name>
    <dbReference type="NCBI Taxonomy" id="173849"/>
</organismHost>
<organismHost>
    <name type="scientific">Rottboellia cochinchinensis</name>
    <dbReference type="NCBI Taxonomy" id="300125"/>
</organismHost>
<organismHost>
    <name type="scientific">Saccharum officinarum</name>
    <name type="common">Sugarcane</name>
    <dbReference type="NCBI Taxonomy" id="4547"/>
</organismHost>
<organismHost>
    <name type="scientific">Setaria barbata</name>
    <dbReference type="NCBI Taxonomy" id="192628"/>
</organismHost>
<organismHost>
    <name type="scientific">Triticum aestivum</name>
    <name type="common">Wheat</name>
    <dbReference type="NCBI Taxonomy" id="4565"/>
</organismHost>
<organismHost>
    <name type="scientific">Urochloa deflexa</name>
    <dbReference type="NCBI Taxonomy" id="240436"/>
</organismHost>
<organismHost>
    <name type="scientific">Zea mays</name>
    <name type="common">Maize</name>
    <dbReference type="NCBI Taxonomy" id="4577"/>
</organismHost>
<protein>
    <recommendedName>
        <fullName>Capsid protein</fullName>
    </recommendedName>
    <alternativeName>
        <fullName>Coat protein</fullName>
        <shortName>CP</shortName>
    </alternativeName>
</protein>
<dbReference type="EMBL" id="AF239962">
    <property type="protein sequence ID" value="AAF97762.1"/>
    <property type="molecule type" value="Genomic_DNA"/>
</dbReference>
<dbReference type="SMR" id="Q9IGY8"/>
<dbReference type="Proteomes" id="UP000007782">
    <property type="component" value="Segment"/>
</dbReference>
<dbReference type="GO" id="GO:0043657">
    <property type="term" value="C:host cell"/>
    <property type="evidence" value="ECO:0007669"/>
    <property type="project" value="GOC"/>
</dbReference>
<dbReference type="GO" id="GO:0042025">
    <property type="term" value="C:host cell nucleus"/>
    <property type="evidence" value="ECO:0007669"/>
    <property type="project" value="UniProtKB-SubCell"/>
</dbReference>
<dbReference type="GO" id="GO:0039615">
    <property type="term" value="C:T=1 icosahedral viral capsid"/>
    <property type="evidence" value="ECO:0007669"/>
    <property type="project" value="UniProtKB-KW"/>
</dbReference>
<dbReference type="GO" id="GO:0003677">
    <property type="term" value="F:DNA binding"/>
    <property type="evidence" value="ECO:0007669"/>
    <property type="project" value="UniProtKB-KW"/>
</dbReference>
<dbReference type="GO" id="GO:0005198">
    <property type="term" value="F:structural molecule activity"/>
    <property type="evidence" value="ECO:0007669"/>
    <property type="project" value="InterPro"/>
</dbReference>
<dbReference type="GO" id="GO:0046718">
    <property type="term" value="P:symbiont entry into host cell"/>
    <property type="evidence" value="ECO:0007669"/>
    <property type="project" value="UniProtKB-KW"/>
</dbReference>
<dbReference type="GO" id="GO:0075732">
    <property type="term" value="P:viral penetration into host nucleus"/>
    <property type="evidence" value="ECO:0007669"/>
    <property type="project" value="UniProtKB-KW"/>
</dbReference>
<dbReference type="Gene3D" id="2.60.120.20">
    <property type="match status" value="1"/>
</dbReference>
<dbReference type="InterPro" id="IPR000143">
    <property type="entry name" value="Gemcoat_MSV"/>
</dbReference>
<dbReference type="InterPro" id="IPR000263">
    <property type="entry name" value="GV_A/BR1_coat"/>
</dbReference>
<dbReference type="InterPro" id="IPR029053">
    <property type="entry name" value="Viral_coat"/>
</dbReference>
<dbReference type="Pfam" id="PF00844">
    <property type="entry name" value="Gemini_coat"/>
    <property type="match status" value="1"/>
</dbReference>
<dbReference type="PRINTS" id="PR00223">
    <property type="entry name" value="GEMCOATARBR1"/>
</dbReference>
<dbReference type="PRINTS" id="PR00226">
    <property type="entry name" value="GEMCOATMSV"/>
</dbReference>
<evidence type="ECO:0000250" key="1"/>
<evidence type="ECO:0000256" key="2">
    <source>
        <dbReference type="SAM" id="MobiDB-lite"/>
    </source>
</evidence>
<evidence type="ECO:0000305" key="3"/>
<reference key="1">
    <citation type="submission" date="2000-03" db="EMBL/GenBank/DDBJ databases">
        <title>Characterization of three maize streak viruses.</title>
        <authorList>
            <person name="Willment J.A."/>
            <person name="Martin D.P."/>
            <person name="Rybicki E.P."/>
        </authorList>
    </citation>
    <scope>NUCLEOTIDE SEQUENCE [GENOMIC DNA]</scope>
</reference>
<keyword id="KW-0167">Capsid protein</keyword>
<keyword id="KW-0238">DNA-binding</keyword>
<keyword id="KW-1048">Host nucleus</keyword>
<keyword id="KW-1140">T=1 icosahedral capsid protein</keyword>
<keyword id="KW-1163">Viral penetration into host nucleus</keyword>
<keyword id="KW-0946">Virion</keyword>
<keyword id="KW-1160">Virus entry into host cell</keyword>
<accession>Q9IGY8</accession>
<proteinExistence type="inferred from homology"/>